<sequence>MEPSVDANSITITVEGMTCISCVRTIEQQIGKVNGVHHIKVSLEEKSATIIYDPKLQTPKTLQEAIDDMGFDALLHNANPLPVLTNTVFLTVTAPLTLPWDHIQSTLLKTKGVTGVKISPQQRSAVVTIIPSVVSASQIVELVPDLSLDMGTQEKKSGACEEHSTPQAGEVMLKMKVEGMTCHSCTSTIEGKVGKLQGVQRIKVSLDNQEATIVFQPHLITAEEIKKQIEAVGFPAFIKKQPKYLKLGAIDVERLKNTPVKSSEGSQQKSPSYPSDSTTMFTIEGMHCKSCVSNIESALSTLQYVSSIVVSLENRSAIVKYNASLVTPEMLRKAIEAISPGQYRVSIASEVESTASSPSSSSLQKMPLNIVSQPLTQEAVININGMTCNSCVQSIEGVISKKPGVKSIHVSLANSTGTIEFDPLLTSPETLREAIEDMGFDAALPDMKEPLVVIAQPSLETPLLPSSNELENVMTSVQNKCYIQVSGMTCASCVANIERNLRREEGIYSVLVALMAGKAEVRYNPAVIQPRVIAEFIRELGFGAMVMENAGEGNGILELVVRGMTCASCVHKIESTLTKHKGIFYCSVALATNKAHIKYDPEIIGPRDIIHTIGSLGFEASLVKKDRSANHLDHKREIKQWRGSFLVSLFFCIPVMGLMVYMMVMDHHLATLHHNQNMSNEEMINMHSAMFLERQILPGLSIMNLLSLLLCLPVQFCGGWYFYIQAYKALKHKTANMDVLIVLATTIAFAYSLVILLVAMFERAKVNPITFFDTPPMLFVFIALGRWLEHIAKGKTSEALAKLISLQATEATIVTLNSENLLLSEEQVDVELVQRGDIIKVVPGGKFPVDGRVIEGHSMVDESLITGEAMPVAKKPGSTVIAGSINQNGSLLIRATHVGADTTLSQIVKLVEEAQTSKAPIQQFADKLSGYFVPFIVLVSIVTLLVWIIIGFQNFEIVETYFPGYNRSISRTETIIRFAFQASITVLCIACPCSLGLATPTAVMVGTGVGAQNGILIKGGEPLEMAHKVKVVVFDKTGTITHGTPVVNQVKVLVESNKISRNKILAIVGTAESNSEHPLGAAVTKYCKKELDTETLGTCTDFQVVPGCGISCKVTNIEGLLHKSNLKIEENNIKNASLVQIDAINEQSSTSSSMIIDAHLSNAVNTQQYKVLIGNREWMIRNGLVISNDVDESMIEHERRGRTAVLVTIDDELCGLIAIADTVKPEAELAVHILKSMGLEVVLMTGDNSKTARSIASQVGITKVFAEVLPSHKVAKVKQLQEEGKRVAMVGDGINDSPALAMANVGIAIGTGTDVAIEAADVVLIRNDLLDVVASIDLSRKTVKRIRINFVFALIYNLVGIPIAAGVFLPIGLVLQPWMGSAAMAASSVSVVLSSLFLKLYRKPTYDNYELHPRSHTGQRSPSEISVHVGIDDTSRNSPRLGLLDRIVNYSRASINSLLSDKRSLNSVVTSEPDKHSLLVGDFREDDDTTL</sequence>
<organism>
    <name type="scientific">Mus musculus</name>
    <name type="common">Mouse</name>
    <dbReference type="NCBI Taxonomy" id="10090"/>
    <lineage>
        <taxon>Eukaryota</taxon>
        <taxon>Metazoa</taxon>
        <taxon>Chordata</taxon>
        <taxon>Craniata</taxon>
        <taxon>Vertebrata</taxon>
        <taxon>Euteleostomi</taxon>
        <taxon>Mammalia</taxon>
        <taxon>Eutheria</taxon>
        <taxon>Euarchontoglires</taxon>
        <taxon>Glires</taxon>
        <taxon>Rodentia</taxon>
        <taxon>Myomorpha</taxon>
        <taxon>Muroidea</taxon>
        <taxon>Muridae</taxon>
        <taxon>Murinae</taxon>
        <taxon>Mus</taxon>
        <taxon>Mus</taxon>
    </lineage>
</organism>
<feature type="chain" id="PRO_0000046312" description="Copper-transporting ATPase 1">
    <location>
        <begin position="1"/>
        <end position="1491"/>
    </location>
</feature>
<feature type="topological domain" description="Cytoplasmic" evidence="4">
    <location>
        <begin position="1"/>
        <end position="644"/>
    </location>
</feature>
<feature type="transmembrane region" description="Helical" evidence="4">
    <location>
        <begin position="645"/>
        <end position="666"/>
    </location>
</feature>
<feature type="topological domain" description="Extracellular" evidence="4">
    <location>
        <begin position="667"/>
        <end position="705"/>
    </location>
</feature>
<feature type="transmembrane region" description="Helical" evidence="4">
    <location>
        <begin position="706"/>
        <end position="725"/>
    </location>
</feature>
<feature type="topological domain" description="Cytoplasmic" evidence="4">
    <location>
        <begin position="726"/>
        <end position="732"/>
    </location>
</feature>
<feature type="transmembrane region" description="Helical" evidence="4">
    <location>
        <begin position="733"/>
        <end position="753"/>
    </location>
</feature>
<feature type="topological domain" description="Extracellular" evidence="4">
    <location>
        <begin position="754"/>
        <end position="772"/>
    </location>
</feature>
<feature type="transmembrane region" description="Helical" evidence="4">
    <location>
        <begin position="773"/>
        <end position="793"/>
    </location>
</feature>
<feature type="topological domain" description="Cytoplasmic" evidence="4">
    <location>
        <begin position="794"/>
        <end position="926"/>
    </location>
</feature>
<feature type="transmembrane region" description="Helical" evidence="4">
    <location>
        <begin position="927"/>
        <end position="950"/>
    </location>
</feature>
<feature type="topological domain" description="Extracellular" evidence="4">
    <location>
        <begin position="951"/>
        <end position="980"/>
    </location>
</feature>
<feature type="transmembrane region" description="Helical" evidence="4">
    <location>
        <begin position="981"/>
        <end position="1002"/>
    </location>
</feature>
<feature type="topological domain" description="Cytoplasmic" evidence="4">
    <location>
        <begin position="1003"/>
        <end position="1347"/>
    </location>
</feature>
<feature type="transmembrane region" description="Helical" evidence="4">
    <location>
        <begin position="1348"/>
        <end position="1365"/>
    </location>
</feature>
<feature type="topological domain" description="Extracellular" evidence="4">
    <location>
        <begin position="1366"/>
        <end position="1376"/>
    </location>
</feature>
<feature type="transmembrane region" description="Helical" evidence="4">
    <location>
        <begin position="1377"/>
        <end position="1396"/>
    </location>
</feature>
<feature type="topological domain" description="Cytoplasmic" evidence="4">
    <location>
        <begin position="1397"/>
        <end position="1491"/>
    </location>
</feature>
<feature type="domain" description="HMA 1" evidence="5">
    <location>
        <begin position="8"/>
        <end position="74"/>
    </location>
</feature>
<feature type="domain" description="HMA 2" evidence="5">
    <location>
        <begin position="85"/>
        <end position="151"/>
    </location>
</feature>
<feature type="domain" description="HMA 3" evidence="5">
    <location>
        <begin position="171"/>
        <end position="237"/>
    </location>
</feature>
<feature type="domain" description="HMA 4" evidence="5">
    <location>
        <begin position="277"/>
        <end position="343"/>
    </location>
</feature>
<feature type="domain" description="HMA 5" evidence="5">
    <location>
        <begin position="377"/>
        <end position="443"/>
    </location>
</feature>
<feature type="domain" description="HMA 6" evidence="5">
    <location>
        <begin position="479"/>
        <end position="545"/>
    </location>
</feature>
<feature type="domain" description="HMA 7" evidence="5">
    <location>
        <begin position="555"/>
        <end position="621"/>
    </location>
</feature>
<feature type="region of interest" description="PDZD11-binding" evidence="1">
    <location>
        <begin position="1477"/>
        <end position="1491"/>
    </location>
</feature>
<feature type="short sequence motif" description="Endocytosis signal" evidence="11">
    <location>
        <begin position="1458"/>
        <end position="1459"/>
    </location>
</feature>
<feature type="short sequence motif" description="Endocytosis signal" evidence="11">
    <location>
        <begin position="1478"/>
        <end position="1479"/>
    </location>
</feature>
<feature type="active site" description="4-aspartylphosphate intermediate" evidence="17">
    <location>
        <position position="1035"/>
    </location>
</feature>
<feature type="binding site" evidence="3">
    <location>
        <position position="18"/>
    </location>
    <ligand>
        <name>Cu(+)</name>
        <dbReference type="ChEBI" id="CHEBI:49552"/>
        <label>1</label>
    </ligand>
</feature>
<feature type="binding site" evidence="5">
    <location>
        <position position="19"/>
    </location>
    <ligand>
        <name>Cu(+)</name>
        <dbReference type="ChEBI" id="CHEBI:49552"/>
        <label>1</label>
    </ligand>
</feature>
<feature type="binding site" evidence="5">
    <location>
        <position position="22"/>
    </location>
    <ligand>
        <name>Cu(+)</name>
        <dbReference type="ChEBI" id="CHEBI:49552"/>
        <label>1</label>
    </ligand>
</feature>
<feature type="binding site" evidence="5">
    <location>
        <position position="182"/>
    </location>
    <ligand>
        <name>Cu(+)</name>
        <dbReference type="ChEBI" id="CHEBI:49552"/>
        <label>2</label>
    </ligand>
</feature>
<feature type="binding site" evidence="5">
    <location>
        <position position="185"/>
    </location>
    <ligand>
        <name>Cu(+)</name>
        <dbReference type="ChEBI" id="CHEBI:49552"/>
        <label>2</label>
    </ligand>
</feature>
<feature type="binding site" evidence="5">
    <location>
        <position position="288"/>
    </location>
    <ligand>
        <name>Cu(+)</name>
        <dbReference type="ChEBI" id="CHEBI:49552"/>
        <label>3</label>
    </ligand>
</feature>
<feature type="binding site" evidence="5">
    <location>
        <position position="291"/>
    </location>
    <ligand>
        <name>Cu(+)</name>
        <dbReference type="ChEBI" id="CHEBI:49552"/>
        <label>3</label>
    </ligand>
</feature>
<feature type="binding site" evidence="5">
    <location>
        <position position="388"/>
    </location>
    <ligand>
        <name>Cu(+)</name>
        <dbReference type="ChEBI" id="CHEBI:49552"/>
        <label>4</label>
    </ligand>
</feature>
<feature type="binding site" evidence="5">
    <location>
        <position position="391"/>
    </location>
    <ligand>
        <name>Cu(+)</name>
        <dbReference type="ChEBI" id="CHEBI:49552"/>
        <label>4</label>
    </ligand>
</feature>
<feature type="binding site" evidence="5">
    <location>
        <position position="490"/>
    </location>
    <ligand>
        <name>Cu(+)</name>
        <dbReference type="ChEBI" id="CHEBI:49552"/>
        <label>5</label>
    </ligand>
</feature>
<feature type="binding site" evidence="5">
    <location>
        <position position="493"/>
    </location>
    <ligand>
        <name>Cu(+)</name>
        <dbReference type="ChEBI" id="CHEBI:49552"/>
        <label>5</label>
    </ligand>
</feature>
<feature type="binding site" evidence="5">
    <location>
        <position position="566"/>
    </location>
    <ligand>
        <name>Cu(+)</name>
        <dbReference type="ChEBI" id="CHEBI:49552"/>
        <label>6</label>
    </ligand>
</feature>
<feature type="binding site" evidence="5">
    <location>
        <position position="569"/>
    </location>
    <ligand>
        <name>Cu(+)</name>
        <dbReference type="ChEBI" id="CHEBI:49552"/>
        <label>6</label>
    </ligand>
</feature>
<feature type="binding site" evidence="3">
    <location>
        <position position="1072"/>
    </location>
    <ligand>
        <name>ATP</name>
        <dbReference type="ChEBI" id="CHEBI:30616"/>
    </ligand>
</feature>
<feature type="binding site">
    <location>
        <position position="1292"/>
    </location>
    <ligand>
        <name>Mg(2+)</name>
        <dbReference type="ChEBI" id="CHEBI:18420"/>
    </ligand>
</feature>
<feature type="binding site">
    <location>
        <position position="1296"/>
    </location>
    <ligand>
        <name>Mg(2+)</name>
        <dbReference type="ChEBI" id="CHEBI:18420"/>
    </ligand>
</feature>
<feature type="modified residue" description="Phosphothreonine" evidence="3">
    <location>
        <position position="152"/>
    </location>
</feature>
<feature type="modified residue" description="Phosphoserine" evidence="3">
    <location>
        <position position="270"/>
    </location>
</feature>
<feature type="modified residue" description="Phosphothreonine" evidence="3">
    <location>
        <position position="327"/>
    </location>
</feature>
<feature type="modified residue" description="Phosphoserine" evidence="3">
    <location>
        <position position="339"/>
    </location>
</feature>
<feature type="modified residue" description="Phosphoserine" evidence="2">
    <location>
        <position position="353"/>
    </location>
</feature>
<feature type="modified residue" description="Phosphoserine" evidence="19 20">
    <location>
        <position position="357"/>
    </location>
</feature>
<feature type="modified residue" description="Phosphoserine" evidence="20">
    <location>
        <position position="362"/>
    </location>
</feature>
<feature type="modified residue" description="Phosphothreonine" evidence="2">
    <location>
        <position position="1203"/>
    </location>
</feature>
<feature type="modified residue" description="Phosphoserine" evidence="3">
    <location>
        <position position="1421"/>
    </location>
</feature>
<feature type="modified residue" description="Phosphoserine" evidence="3">
    <location>
        <position position="1423"/>
    </location>
</feature>
<feature type="modified residue" description="Phosphoserine" evidence="3">
    <location>
        <position position="1451"/>
    </location>
</feature>
<feature type="modified residue" description="Phosphoserine" evidence="3">
    <location>
        <position position="1454"/>
    </location>
</feature>
<feature type="modified residue" description="Phosphoserine" evidence="19">
    <location>
        <position position="1457"/>
    </location>
</feature>
<feature type="modified residue" description="Phosphoserine" evidence="3">
    <location>
        <position position="1460"/>
    </location>
</feature>
<feature type="modified residue" description="Phosphoserine" evidence="20">
    <location>
        <position position="1464"/>
    </location>
</feature>
<feature type="modified residue" description="Phosphoserine" evidence="20">
    <location>
        <position position="1467"/>
    </location>
</feature>
<feature type="modified residue" description="Phosphoserine" evidence="20">
    <location>
        <position position="1477"/>
    </location>
</feature>
<feature type="glycosylation site" description="N-linked (GlcNAc...) asparagine" evidence="4">
    <location>
        <position position="677"/>
    </location>
</feature>
<feature type="glycosylation site" description="N-linked (GlcNAc...) asparagine" evidence="4">
    <location>
        <position position="966"/>
    </location>
</feature>
<feature type="sequence variant" description="In MD." evidence="15">
    <original>H</original>
    <variation>R</variation>
    <location>
        <position position="674"/>
    </location>
</feature>
<feature type="sequence variant" description="In MD." evidence="15">
    <original>S</original>
    <variation>P</variation>
    <location>
        <position position="1381"/>
    </location>
</feature>
<feature type="mutagenesis site" description="Impaired trafficking from endosome to TGN." evidence="11">
    <original>LL</original>
    <variation>AA</variation>
    <location>
        <begin position="1443"/>
        <end position="1444"/>
    </location>
</feature>
<feature type="mutagenesis site" description="Has no effect on trafficking from endosome to TGN." evidence="11">
    <original>LL</original>
    <variation>VV</variation>
    <location>
        <begin position="1443"/>
        <end position="1444"/>
    </location>
</feature>
<feature type="mutagenesis site" description="Impaired trafficking from endosome to TGN." evidence="11">
    <original>LL</original>
    <variation>AA</variation>
    <variation>VV</variation>
    <location>
        <begin position="1458"/>
        <end position="1459"/>
    </location>
</feature>
<feature type="mutagenesis site" description="Impaired endocytosis associated with retention at the plasma membrane." evidence="11">
    <original>LL</original>
    <variation>AA</variation>
    <variation>VV</variation>
    <location>
        <begin position="1478"/>
        <end position="1479"/>
    </location>
</feature>
<feature type="sequence conflict" description="In Ref. 1; AAA57445 and 4; AAB37301." evidence="17" ref="1 4">
    <original>E</original>
    <variation>D</variation>
    <location>
        <position position="44"/>
    </location>
</feature>
<feature type="sequence conflict" description="In Ref. 1; AAA57445 and 4; AAB37301." evidence="17" ref="1 4">
    <original>I</original>
    <variation>V</variation>
    <location>
        <position position="103"/>
    </location>
</feature>
<feature type="sequence conflict" description="In Ref. 1; AAA57445 and 4; AAB37301." evidence="17" ref="1 4">
    <original>M</original>
    <variation>R</variation>
    <location>
        <position position="172"/>
    </location>
</feature>
<feature type="sequence conflict" description="In Ref. 2; AAB08487." evidence="17" ref="2">
    <original>LK</original>
    <variation>PI</variation>
    <location>
        <begin position="245"/>
        <end position="246"/>
    </location>
</feature>
<feature type="sequence conflict" description="In Ref. 2; AAB08487 and 4; AAB37301." evidence="17" ref="2 4">
    <original>P</original>
    <variation>PA</variation>
    <location>
        <position position="445"/>
    </location>
</feature>
<feature type="sequence conflict" description="In Ref. 2; AAB08487, 3; BAA22369 and 4; AAB37301." evidence="17" ref="2 3 4">
    <original>L</original>
    <variation>P</variation>
    <location>
        <position position="470"/>
    </location>
</feature>
<feature type="sequence conflict" description="In Ref. 1; AAA57445 and 4; AAB37301." evidence="17" ref="1 4">
    <original>M</original>
    <variation>T</variation>
    <location>
        <position position="515"/>
    </location>
</feature>
<feature type="sequence conflict" description="In Ref. 2; AAB08487." evidence="17" ref="2">
    <original>C</original>
    <variation>F</variation>
    <location>
        <position position="717"/>
    </location>
</feature>
<feature type="sequence conflict" description="In Ref. 2; AAB08487." evidence="17" ref="2">
    <original>T</original>
    <variation>A</variation>
    <location>
        <position position="770"/>
    </location>
</feature>
<feature type="sequence conflict" description="In Ref. 2; AAB08487." evidence="17" ref="2">
    <original>P</original>
    <variation>S</variation>
    <location>
        <position position="775"/>
    </location>
</feature>
<feature type="sequence conflict" description="In Ref. 2; AAB08487." evidence="17" ref="2">
    <original>I</original>
    <variation>T</variation>
    <location>
        <position position="885"/>
    </location>
</feature>
<feature type="sequence conflict" description="In Ref. 2; AAB08487." evidence="17" ref="2">
    <original>Y</original>
    <variation>H</variation>
    <location>
        <position position="1169"/>
    </location>
</feature>
<feature type="sequence conflict" description="In Ref. 2; AAB08487 and 4; AAB37301." evidence="17" ref="2 4">
    <original>A</original>
    <variation>P</variation>
    <location>
        <position position="1204"/>
    </location>
</feature>
<feature type="sequence conflict" description="In Ref. 1; AAA57445." evidence="17" ref="1">
    <original>I</original>
    <variation>M</variation>
    <location>
        <position position="1217"/>
    </location>
</feature>
<feature type="sequence conflict" description="In Ref. 1; AAA57445." evidence="17" ref="1">
    <original>R</original>
    <variation>Q</variation>
    <location>
        <position position="1253"/>
    </location>
</feature>
<gene>
    <name evidence="16 18" type="primary">Atp7a</name>
    <name type="synonym">Mnk</name>
</gene>
<comment type="function">
    <text evidence="3">ATP-driven copper (Cu(+)) ion pump that plays an important role in intracellular copper ion homeostasis (PubMed:18650808, PubMed:25639447, PubMed:27337370). Within a catalytic cycle, acquires Cu(+) ion from donor protein on the cytoplasmic side of the membrane and delivers it to acceptor protein on the lumenal side. The transfer of Cu(+) ion across the membrane is coupled to ATP hydrolysis and is associated with a transient phosphorylation that shifts the pump conformation from inward-facing to outward-facing state (By similarity). Under physiological conditions, at low cytosolic copper concentration, it is localized at the trans-Golgi network (TGN) where it transfers Cu(+) ions to cuproenzymes of the secretory pathway (PubMed:12488345, PubMed:16371425, PubMed:18650808, PubMed:27337370). Upon elevated cytosolic copper concentrations, it relocalizes to the plasma membrane where it is responsible for the export of excess Cu(+) ions (By similarity). May play a dual role in neuron function and survival by regulating cooper efflux and neuronal transmission at the synapse as well as by supplying Cu(+) ions to enzymes such as PAM, TYR and SOD3 (PubMed:12488345, PubMed:15634787, PubMed:16371425, PubMed:25639447). In the melanosomes of pigmented cells, provides copper cofactor to TYR to form an active TYR holoenzyme for melanin biosynthesis (PubMed:18650808).</text>
</comment>
<comment type="catalytic activity">
    <reaction evidence="3">
        <text>Cu(+)(in) + ATP + H2O = Cu(+)(out) + ADP + phosphate + H(+)</text>
        <dbReference type="Rhea" id="RHEA:25792"/>
        <dbReference type="ChEBI" id="CHEBI:15377"/>
        <dbReference type="ChEBI" id="CHEBI:15378"/>
        <dbReference type="ChEBI" id="CHEBI:30616"/>
        <dbReference type="ChEBI" id="CHEBI:43474"/>
        <dbReference type="ChEBI" id="CHEBI:49552"/>
        <dbReference type="ChEBI" id="CHEBI:456216"/>
        <dbReference type="EC" id="7.2.2.8"/>
    </reaction>
    <physiologicalReaction direction="left-to-right" evidence="3">
        <dbReference type="Rhea" id="RHEA:25793"/>
    </physiologicalReaction>
</comment>
<comment type="subunit">
    <text evidence="3 8 9">Monomer. Interacts with PDZD11. Interacts with ATOX1 and COMMD1 (By similarity). Interacts with TYRP1 (PubMed:18650808). Directly interacts with SOD3; this interaction is copper-dependent and is required for SOD3 activity (PubMed:16371425).</text>
</comment>
<comment type="subcellular location">
    <subcellularLocation>
        <location evidence="8 9 11">Golgi apparatus</location>
        <location evidence="8 9 11">trans-Golgi network membrane</location>
        <topology evidence="4">Multi-pass membrane protein</topology>
    </subcellularLocation>
    <subcellularLocation>
        <location evidence="11">Cell membrane</location>
        <topology evidence="4">Multi-pass membrane protein</topology>
    </subcellularLocation>
    <subcellularLocation>
        <location evidence="9">Melanosome membrane</location>
        <topology evidence="4">Multi-pass membrane protein</topology>
    </subcellularLocation>
    <subcellularLocation>
        <location evidence="11">Early endosome membrane</location>
        <topology evidence="4">Multi-pass membrane protein</topology>
    </subcellularLocation>
    <subcellularLocation>
        <location evidence="2">Cell projection</location>
        <location evidence="2">Axon</location>
    </subcellularLocation>
    <subcellularLocation>
        <location evidence="2">Cell projection</location>
        <location evidence="2">Dendrite</location>
    </subcellularLocation>
    <subcellularLocation>
        <location evidence="2">Postsynaptic density</location>
    </subcellularLocation>
    <text evidence="2 9 11">Cycles constitutively between the TGN and the plasma membrane. Predominantly found in the TGN and relocalized to the plasma membrane in response to elevated copper levels (PubMed:27337370). Targeting into melanosomes is regulated by BLOC-1 complex (PubMed:18650808). In response to glutamate translocates to neuron processes with a minor fraction at extrasynaptic sites (By similarity).</text>
</comment>
<comment type="tissue specificity">
    <text evidence="6 7 8 9 10 12 14">Widely expressed (PubMed:12488345, PubMed:25639447, PubMed:8054976). Highly expressed in pituitary endocrine cells (PubMed:12488345). Expressed in melanocytes (at protein level) (PubMed:18650808). Expressed in motor neuron (at protein level) (PubMed:25639447). Expressed in hippocampal neuron (at protein level) (PubMed:15634787). In the kidney, it is detected in the proximal and distal tubules (at protein level) (PubMed:9215672). Expressed in aorta (at protein level) (PubMed:16371425).</text>
</comment>
<comment type="developmental stage">
    <text evidence="6">Detected 10 days after birth in pituitary and adrenal endocrine tissues and at a lower level in hypothalamus and atrium (at protein level).</text>
</comment>
<comment type="domain">
    <text evidence="3">The ATP binding site comprises residues located in alpha-1 and alpha-2 helices and beta-2 and beta-3 strands, which are involved in van der Waal's interactions, and Glu-1072 which forms a hydrogen bond with the adenine ring.</text>
</comment>
<comment type="domain">
    <text evidence="3">The heavy-metal-associated domain (HMA) coordinates a Cu(+) ion via the cysteine residues within the CXXC motif. The transfer of Cu(+) ion from ATOX1 to ATP7A involves the formation of a three-coordinate Cu(+)-bridged heterodimer where the metal is shared between the two metal binding sites of ATOX1 and ATP7A. The Cu(+) ion appears to switch between two coordination modes, forming two links with one protein and one with the other. Cisplatin, a chemotherapeutic drug, can bind the CXXC motif and hinder the release of Cu(+) ion.</text>
</comment>
<comment type="domain">
    <text evidence="11">Contains three di-leucine motifs in the C-terminus which are required for recycling from the plasma membrane to the TGN. The di-leucine 1478-Leu-Leu-1479 motif mediates endocytosis at the plasma membrane, whereas the di-leucine 1458-Leu-Leu-1459 motif is a sorting signal for retrograde trafficking to TGN via early endosomes.</text>
</comment>
<comment type="disease">
    <text evidence="12 13 14 15">Defects in Atp7a are associated with mottled, an X-linked recessive condition characterized by mottled pigmentation of the coat, defects in connective tissue and neonatal or fetal death. It is due to a defect in absorption and transport of copper. The mottled mutants exhibit a diversity of phenotypes. Two of these mutants are called brindled and blotchy and their phenotypes resemble classical Menkes disease (MD) and occipital horn syndrome (OHS) in humans, respectively. Other mutants are called dappled, mosaic, tortoiseshell, pewter, etc.</text>
</comment>
<comment type="disruption phenotype">
    <text evidence="10">Cell-specific silencing in motor neurons is associated with loss of motor neuron cell bodies and progressive denervation of the neuromuscular junctions with aging, consistent with the clinical features of human distal spinal muscular atrophy X-linked disease, 3 (DSMAX3).</text>
</comment>
<comment type="similarity">
    <text evidence="17">Belongs to the cation transport ATPase (P-type) (TC 3.A.3) family. Type IB subfamily.</text>
</comment>
<comment type="online information" name="Protein Spotlight">
    <link uri="https://www.proteinspotlight.org/back_issues/079"/>
    <text>Heavy metal - Issue 79 of February 2007</text>
</comment>
<dbReference type="EC" id="7.2.2.8" evidence="3"/>
<dbReference type="EMBL" id="U03434">
    <property type="protein sequence ID" value="AAA57445.1"/>
    <property type="molecule type" value="mRNA"/>
</dbReference>
<dbReference type="EMBL" id="U03736">
    <property type="protein sequence ID" value="AAB08487.1"/>
    <property type="molecule type" value="mRNA"/>
</dbReference>
<dbReference type="EMBL" id="AB007134">
    <property type="protein sequence ID" value="BAA22369.1"/>
    <property type="molecule type" value="mRNA"/>
</dbReference>
<dbReference type="EMBL" id="U71091">
    <property type="protein sequence ID" value="AAB37301.1"/>
    <property type="molecule type" value="mRNA"/>
</dbReference>
<dbReference type="EMBL" id="AL672288">
    <property type="status" value="NOT_ANNOTATED_CDS"/>
    <property type="molecule type" value="Genomic_DNA"/>
</dbReference>
<dbReference type="CCDS" id="CCDS41097.1"/>
<dbReference type="PIR" id="S43793">
    <property type="entry name" value="S43793"/>
</dbReference>
<dbReference type="RefSeq" id="NP_033856.3">
    <property type="nucleotide sequence ID" value="NM_009726.5"/>
</dbReference>
<dbReference type="SMR" id="Q64430"/>
<dbReference type="BioGRID" id="198268">
    <property type="interactions" value="30"/>
</dbReference>
<dbReference type="CORUM" id="Q64430"/>
<dbReference type="FunCoup" id="Q64430">
    <property type="interactions" value="2249"/>
</dbReference>
<dbReference type="IntAct" id="Q64430">
    <property type="interactions" value="27"/>
</dbReference>
<dbReference type="STRING" id="10090.ENSMUSP00000058840"/>
<dbReference type="ChEMBL" id="CHEMBL5291565"/>
<dbReference type="GlyCosmos" id="Q64430">
    <property type="glycosylation" value="2 sites, No reported glycans"/>
</dbReference>
<dbReference type="GlyGen" id="Q64430">
    <property type="glycosylation" value="4 sites, 2 N-linked glycans (2 sites)"/>
</dbReference>
<dbReference type="iPTMnet" id="Q64430"/>
<dbReference type="PhosphoSitePlus" id="Q64430"/>
<dbReference type="SwissPalm" id="Q64430"/>
<dbReference type="jPOST" id="Q64430"/>
<dbReference type="PaxDb" id="10090-ENSMUSP00000058840"/>
<dbReference type="ProteomicsDB" id="277131"/>
<dbReference type="Pumba" id="Q64430"/>
<dbReference type="ABCD" id="Q64430">
    <property type="antibodies" value="1 sequenced antibody"/>
</dbReference>
<dbReference type="Antibodypedia" id="536">
    <property type="antibodies" value="405 antibodies from 36 providers"/>
</dbReference>
<dbReference type="DNASU" id="11977"/>
<dbReference type="Ensembl" id="ENSMUST00000113557.8">
    <property type="protein sequence ID" value="ENSMUSP00000109186.2"/>
    <property type="gene ID" value="ENSMUSG00000033792.13"/>
</dbReference>
<dbReference type="GeneID" id="11977"/>
<dbReference type="KEGG" id="mmu:11977"/>
<dbReference type="UCSC" id="uc012hnn.2">
    <property type="organism name" value="mouse"/>
</dbReference>
<dbReference type="AGR" id="MGI:99400"/>
<dbReference type="CTD" id="538"/>
<dbReference type="MGI" id="MGI:99400">
    <property type="gene designation" value="Atp7a"/>
</dbReference>
<dbReference type="VEuPathDB" id="HostDB:ENSMUSG00000033792"/>
<dbReference type="eggNOG" id="KOG0207">
    <property type="taxonomic scope" value="Eukaryota"/>
</dbReference>
<dbReference type="GeneTree" id="ENSGT00940000159568"/>
<dbReference type="HOGENOM" id="CLU_001771_0_1_1"/>
<dbReference type="InParanoid" id="Q64430"/>
<dbReference type="OrthoDB" id="432719at2759"/>
<dbReference type="BRENDA" id="7.2.2.8">
    <property type="organism ID" value="3474"/>
</dbReference>
<dbReference type="BRENDA" id="7.2.2.9">
    <property type="organism ID" value="3474"/>
</dbReference>
<dbReference type="Reactome" id="R-MMU-6803544">
    <property type="pathway name" value="Ion influx/efflux at host-pathogen interface"/>
</dbReference>
<dbReference type="Reactome" id="R-MMU-936837">
    <property type="pathway name" value="Ion transport by P-type ATPases"/>
</dbReference>
<dbReference type="BioGRID-ORCS" id="11977">
    <property type="hits" value="4 hits in 80 CRISPR screens"/>
</dbReference>
<dbReference type="ChiTaRS" id="Atp7a">
    <property type="organism name" value="mouse"/>
</dbReference>
<dbReference type="PRO" id="PR:Q64430"/>
<dbReference type="Proteomes" id="UP000000589">
    <property type="component" value="Chromosome X"/>
</dbReference>
<dbReference type="RNAct" id="Q64430">
    <property type="molecule type" value="protein"/>
</dbReference>
<dbReference type="Bgee" id="ENSMUSG00000033792">
    <property type="expression patterns" value="Expressed in choroid plexus epithelium and 257 other cell types or tissues"/>
</dbReference>
<dbReference type="ExpressionAtlas" id="Q64430">
    <property type="expression patterns" value="baseline and differential"/>
</dbReference>
<dbReference type="GO" id="GO:0030424">
    <property type="term" value="C:axon"/>
    <property type="evidence" value="ECO:0000250"/>
    <property type="project" value="UniProtKB"/>
</dbReference>
<dbReference type="GO" id="GO:0016323">
    <property type="term" value="C:basolateral plasma membrane"/>
    <property type="evidence" value="ECO:0007669"/>
    <property type="project" value="Ensembl"/>
</dbReference>
<dbReference type="GO" id="GO:0031410">
    <property type="term" value="C:cytoplasmic vesicle"/>
    <property type="evidence" value="ECO:0000314"/>
    <property type="project" value="MGI"/>
</dbReference>
<dbReference type="GO" id="GO:0030425">
    <property type="term" value="C:dendrite"/>
    <property type="evidence" value="ECO:0000250"/>
    <property type="project" value="UniProtKB"/>
</dbReference>
<dbReference type="GO" id="GO:0031901">
    <property type="term" value="C:early endosome membrane"/>
    <property type="evidence" value="ECO:0000314"/>
    <property type="project" value="UniProtKB"/>
</dbReference>
<dbReference type="GO" id="GO:0005794">
    <property type="term" value="C:Golgi apparatus"/>
    <property type="evidence" value="ECO:0000314"/>
    <property type="project" value="MGI"/>
</dbReference>
<dbReference type="GO" id="GO:0005770">
    <property type="term" value="C:late endosome"/>
    <property type="evidence" value="ECO:0007669"/>
    <property type="project" value="Ensembl"/>
</dbReference>
<dbReference type="GO" id="GO:0033162">
    <property type="term" value="C:melanosome membrane"/>
    <property type="evidence" value="ECO:0000314"/>
    <property type="project" value="UniProtKB"/>
</dbReference>
<dbReference type="GO" id="GO:0016020">
    <property type="term" value="C:membrane"/>
    <property type="evidence" value="ECO:0000314"/>
    <property type="project" value="MGI"/>
</dbReference>
<dbReference type="GO" id="GO:0043005">
    <property type="term" value="C:neuron projection"/>
    <property type="evidence" value="ECO:0000314"/>
    <property type="project" value="MGI"/>
</dbReference>
<dbReference type="GO" id="GO:0043025">
    <property type="term" value="C:neuronal cell body"/>
    <property type="evidence" value="ECO:0000314"/>
    <property type="project" value="MGI"/>
</dbReference>
<dbReference type="GO" id="GO:0048471">
    <property type="term" value="C:perinuclear region of cytoplasm"/>
    <property type="evidence" value="ECO:0007669"/>
    <property type="project" value="Ensembl"/>
</dbReference>
<dbReference type="GO" id="GO:0005886">
    <property type="term" value="C:plasma membrane"/>
    <property type="evidence" value="ECO:0000314"/>
    <property type="project" value="UniProtKB"/>
</dbReference>
<dbReference type="GO" id="GO:0014069">
    <property type="term" value="C:postsynaptic density"/>
    <property type="evidence" value="ECO:0007669"/>
    <property type="project" value="UniProtKB-SubCell"/>
</dbReference>
<dbReference type="GO" id="GO:0005802">
    <property type="term" value="C:trans-Golgi network"/>
    <property type="evidence" value="ECO:0000314"/>
    <property type="project" value="MGI"/>
</dbReference>
<dbReference type="GO" id="GO:0032588">
    <property type="term" value="C:trans-Golgi network membrane"/>
    <property type="evidence" value="ECO:0000314"/>
    <property type="project" value="UniProtKB"/>
</dbReference>
<dbReference type="GO" id="GO:0030140">
    <property type="term" value="C:trans-Golgi network transport vesicle"/>
    <property type="evidence" value="ECO:0000250"/>
    <property type="project" value="HGNC-UCL"/>
</dbReference>
<dbReference type="GO" id="GO:0005524">
    <property type="term" value="F:ATP binding"/>
    <property type="evidence" value="ECO:0000250"/>
    <property type="project" value="UniProtKB"/>
</dbReference>
<dbReference type="GO" id="GO:0016887">
    <property type="term" value="F:ATP hydrolysis activity"/>
    <property type="evidence" value="ECO:0007669"/>
    <property type="project" value="InterPro"/>
</dbReference>
<dbReference type="GO" id="GO:0005507">
    <property type="term" value="F:copper ion binding"/>
    <property type="evidence" value="ECO:0000250"/>
    <property type="project" value="HGNC"/>
</dbReference>
<dbReference type="GO" id="GO:0005375">
    <property type="term" value="F:copper ion transmembrane transporter activity"/>
    <property type="evidence" value="ECO:0000315"/>
    <property type="project" value="MGI"/>
</dbReference>
<dbReference type="GO" id="GO:0032767">
    <property type="term" value="F:copper-dependent protein binding"/>
    <property type="evidence" value="ECO:0000250"/>
    <property type="project" value="UniProtKB"/>
</dbReference>
<dbReference type="GO" id="GO:1903136">
    <property type="term" value="F:cuprous ion binding"/>
    <property type="evidence" value="ECO:0000250"/>
    <property type="project" value="UniProtKB"/>
</dbReference>
<dbReference type="GO" id="GO:0043682">
    <property type="term" value="F:P-type divalent copper transporter activity"/>
    <property type="evidence" value="ECO:0000314"/>
    <property type="project" value="MGI"/>
</dbReference>
<dbReference type="GO" id="GO:0140581">
    <property type="term" value="F:P-type monovalent copper transporter activity"/>
    <property type="evidence" value="ECO:0000250"/>
    <property type="project" value="UniProtKB"/>
</dbReference>
<dbReference type="GO" id="GO:0016532">
    <property type="term" value="F:superoxide dismutase copper chaperone activity"/>
    <property type="evidence" value="ECO:0000314"/>
    <property type="project" value="MGI"/>
</dbReference>
<dbReference type="GO" id="GO:0046034">
    <property type="term" value="P:ATP metabolic process"/>
    <property type="evidence" value="ECO:0000315"/>
    <property type="project" value="MGI"/>
</dbReference>
<dbReference type="GO" id="GO:0001568">
    <property type="term" value="P:blood vessel development"/>
    <property type="evidence" value="ECO:0000315"/>
    <property type="project" value="MGI"/>
</dbReference>
<dbReference type="GO" id="GO:0001974">
    <property type="term" value="P:blood vessel remodeling"/>
    <property type="evidence" value="ECO:0000315"/>
    <property type="project" value="MGI"/>
</dbReference>
<dbReference type="GO" id="GO:0051216">
    <property type="term" value="P:cartilage development"/>
    <property type="evidence" value="ECO:0000315"/>
    <property type="project" value="MGI"/>
</dbReference>
<dbReference type="GO" id="GO:0006584">
    <property type="term" value="P:catecholamine metabolic process"/>
    <property type="evidence" value="ECO:0000315"/>
    <property type="project" value="MGI"/>
</dbReference>
<dbReference type="GO" id="GO:0021954">
    <property type="term" value="P:central nervous system neuron development"/>
    <property type="evidence" value="ECO:0000315"/>
    <property type="project" value="MGI"/>
</dbReference>
<dbReference type="GO" id="GO:0021702">
    <property type="term" value="P:cerebellar Purkinje cell differentiation"/>
    <property type="evidence" value="ECO:0000315"/>
    <property type="project" value="MGI"/>
</dbReference>
<dbReference type="GO" id="GO:0030199">
    <property type="term" value="P:collagen fibril organization"/>
    <property type="evidence" value="ECO:0000315"/>
    <property type="project" value="MGI"/>
</dbReference>
<dbReference type="GO" id="GO:0060003">
    <property type="term" value="P:copper ion export"/>
    <property type="evidence" value="ECO:0000315"/>
    <property type="project" value="UniProtKB"/>
</dbReference>
<dbReference type="GO" id="GO:0015677">
    <property type="term" value="P:copper ion import"/>
    <property type="evidence" value="ECO:0000315"/>
    <property type="project" value="MGI"/>
</dbReference>
<dbReference type="GO" id="GO:0006825">
    <property type="term" value="P:copper ion transport"/>
    <property type="evidence" value="ECO:0000314"/>
    <property type="project" value="MGI"/>
</dbReference>
<dbReference type="GO" id="GO:0048813">
    <property type="term" value="P:dendrite morphogenesis"/>
    <property type="evidence" value="ECO:0000315"/>
    <property type="project" value="MGI"/>
</dbReference>
<dbReference type="GO" id="GO:0010273">
    <property type="term" value="P:detoxification of copper ion"/>
    <property type="evidence" value="ECO:0000315"/>
    <property type="project" value="MGI"/>
</dbReference>
<dbReference type="GO" id="GO:0042417">
    <property type="term" value="P:dopamine metabolic process"/>
    <property type="evidence" value="ECO:0000315"/>
    <property type="project" value="MGI"/>
</dbReference>
<dbReference type="GO" id="GO:0048251">
    <property type="term" value="P:elastic fiber assembly"/>
    <property type="evidence" value="ECO:0000315"/>
    <property type="project" value="MGI"/>
</dbReference>
<dbReference type="GO" id="GO:0042414">
    <property type="term" value="P:epinephrine metabolic process"/>
    <property type="evidence" value="ECO:0000315"/>
    <property type="project" value="MGI"/>
</dbReference>
<dbReference type="GO" id="GO:0051649">
    <property type="term" value="P:establishment of localization in cell"/>
    <property type="evidence" value="ECO:0000315"/>
    <property type="project" value="MGI"/>
</dbReference>
<dbReference type="GO" id="GO:0030198">
    <property type="term" value="P:extracellular matrix organization"/>
    <property type="evidence" value="ECO:0000315"/>
    <property type="project" value="MGI"/>
</dbReference>
<dbReference type="GO" id="GO:0031069">
    <property type="term" value="P:hair follicle morphogenesis"/>
    <property type="evidence" value="ECO:0000315"/>
    <property type="project" value="MGI"/>
</dbReference>
<dbReference type="GO" id="GO:0006878">
    <property type="term" value="P:intracellular copper ion homeostasis"/>
    <property type="evidence" value="ECO:0000315"/>
    <property type="project" value="UniProtKB"/>
</dbReference>
<dbReference type="GO" id="GO:0006568">
    <property type="term" value="P:L-tryptophan metabolic process"/>
    <property type="evidence" value="ECO:0000315"/>
    <property type="project" value="MGI"/>
</dbReference>
<dbReference type="GO" id="GO:0007626">
    <property type="term" value="P:locomotory behavior"/>
    <property type="evidence" value="ECO:0000315"/>
    <property type="project" value="MGI"/>
</dbReference>
<dbReference type="GO" id="GO:0048286">
    <property type="term" value="P:lung alveolus development"/>
    <property type="evidence" value="ECO:0000315"/>
    <property type="project" value="MGI"/>
</dbReference>
<dbReference type="GO" id="GO:0007005">
    <property type="term" value="P:mitochondrion organization"/>
    <property type="evidence" value="ECO:0000315"/>
    <property type="project" value="MGI"/>
</dbReference>
<dbReference type="GO" id="GO:0045914">
    <property type="term" value="P:negative regulation of catecholamine metabolic process"/>
    <property type="evidence" value="ECO:0000315"/>
    <property type="project" value="MGI"/>
</dbReference>
<dbReference type="GO" id="GO:0043524">
    <property type="term" value="P:negative regulation of neuron apoptotic process"/>
    <property type="evidence" value="ECO:0000315"/>
    <property type="project" value="MGI"/>
</dbReference>
<dbReference type="GO" id="GO:0051402">
    <property type="term" value="P:neuron apoptotic process"/>
    <property type="evidence" value="ECO:0000315"/>
    <property type="project" value="MGI"/>
</dbReference>
<dbReference type="GO" id="GO:0070050">
    <property type="term" value="P:neuron cellular homeostasis"/>
    <property type="evidence" value="ECO:0000315"/>
    <property type="project" value="MGI"/>
</dbReference>
<dbReference type="GO" id="GO:0048812">
    <property type="term" value="P:neuron projection morphogenesis"/>
    <property type="evidence" value="ECO:0000315"/>
    <property type="project" value="MGI"/>
</dbReference>
<dbReference type="GO" id="GO:0042421">
    <property type="term" value="P:norepinephrine biosynthetic process"/>
    <property type="evidence" value="ECO:0000315"/>
    <property type="project" value="MGI"/>
</dbReference>
<dbReference type="GO" id="GO:0042415">
    <property type="term" value="P:norepinephrine metabolic process"/>
    <property type="evidence" value="ECO:0000315"/>
    <property type="project" value="MGI"/>
</dbReference>
<dbReference type="GO" id="GO:0043473">
    <property type="term" value="P:pigmentation"/>
    <property type="evidence" value="ECO:0000315"/>
    <property type="project" value="MGI"/>
</dbReference>
<dbReference type="GO" id="GO:0048023">
    <property type="term" value="P:positive regulation of melanin biosynthetic process"/>
    <property type="evidence" value="ECO:0000250"/>
    <property type="project" value="UniProtKB"/>
</dbReference>
<dbReference type="GO" id="GO:0021860">
    <property type="term" value="P:pyramidal neuron development"/>
    <property type="evidence" value="ECO:0000315"/>
    <property type="project" value="MGI"/>
</dbReference>
<dbReference type="GO" id="GO:0010468">
    <property type="term" value="P:regulation of gene expression"/>
    <property type="evidence" value="ECO:0000315"/>
    <property type="project" value="MGI"/>
</dbReference>
<dbReference type="GO" id="GO:0002082">
    <property type="term" value="P:regulation of oxidative phosphorylation"/>
    <property type="evidence" value="ECO:0000315"/>
    <property type="project" value="MGI"/>
</dbReference>
<dbReference type="GO" id="GO:0001836">
    <property type="term" value="P:release of cytochrome c from mitochondria"/>
    <property type="evidence" value="ECO:0000315"/>
    <property type="project" value="MGI"/>
</dbReference>
<dbReference type="GO" id="GO:0019430">
    <property type="term" value="P:removal of superoxide radicals"/>
    <property type="evidence" value="ECO:0000315"/>
    <property type="project" value="MGI"/>
</dbReference>
<dbReference type="GO" id="GO:0042428">
    <property type="term" value="P:serotonin metabolic process"/>
    <property type="evidence" value="ECO:0000315"/>
    <property type="project" value="MGI"/>
</dbReference>
<dbReference type="GO" id="GO:0043588">
    <property type="term" value="P:skin development"/>
    <property type="evidence" value="ECO:0000315"/>
    <property type="project" value="MGI"/>
</dbReference>
<dbReference type="GO" id="GO:0042093">
    <property type="term" value="P:T-helper cell differentiation"/>
    <property type="evidence" value="ECO:0000315"/>
    <property type="project" value="MGI"/>
</dbReference>
<dbReference type="GO" id="GO:0006570">
    <property type="term" value="P:tyrosine metabolic process"/>
    <property type="evidence" value="ECO:0000315"/>
    <property type="project" value="MGI"/>
</dbReference>
<dbReference type="CDD" id="cd00371">
    <property type="entry name" value="HMA"/>
    <property type="match status" value="6"/>
</dbReference>
<dbReference type="CDD" id="cd02094">
    <property type="entry name" value="P-type_ATPase_Cu-like"/>
    <property type="match status" value="1"/>
</dbReference>
<dbReference type="FunFam" id="3.30.70.100:FF:000026">
    <property type="entry name" value="ATPase copper transporting alpha"/>
    <property type="match status" value="1"/>
</dbReference>
<dbReference type="FunFam" id="3.30.70.100:FF:000001">
    <property type="entry name" value="ATPase copper transporting beta"/>
    <property type="match status" value="3"/>
</dbReference>
<dbReference type="FunFam" id="3.30.70.100:FF:000009">
    <property type="entry name" value="ATPase copper transporting beta"/>
    <property type="match status" value="1"/>
</dbReference>
<dbReference type="FunFam" id="3.30.70.100:FF:000031">
    <property type="entry name" value="copper-transporting ATPase 1"/>
    <property type="match status" value="1"/>
</dbReference>
<dbReference type="FunFam" id="3.40.50.1000:FF:000230">
    <property type="entry name" value="copper-transporting ATPase 1 isoform X1"/>
    <property type="match status" value="1"/>
</dbReference>
<dbReference type="FunFam" id="1.20.1110.10:FF:000022">
    <property type="entry name" value="copper-transporting ATPase 1 isoform X2"/>
    <property type="match status" value="1"/>
</dbReference>
<dbReference type="FunFam" id="2.70.150.10:FF:000002">
    <property type="entry name" value="Copper-transporting ATPase 1, putative"/>
    <property type="match status" value="1"/>
</dbReference>
<dbReference type="FunFam" id="3.40.1110.10:FF:000023">
    <property type="entry name" value="Copper-transporting ATPase 1, putative"/>
    <property type="match status" value="1"/>
</dbReference>
<dbReference type="Gene3D" id="3.30.70.100">
    <property type="match status" value="6"/>
</dbReference>
<dbReference type="Gene3D" id="3.40.1110.10">
    <property type="entry name" value="Calcium-transporting ATPase, cytoplasmic domain N"/>
    <property type="match status" value="1"/>
</dbReference>
<dbReference type="Gene3D" id="2.70.150.10">
    <property type="entry name" value="Calcium-transporting ATPase, cytoplasmic transduction domain A"/>
    <property type="match status" value="1"/>
</dbReference>
<dbReference type="Gene3D" id="3.40.50.1000">
    <property type="entry name" value="HAD superfamily/HAD-like"/>
    <property type="match status" value="1"/>
</dbReference>
<dbReference type="InterPro" id="IPR023299">
    <property type="entry name" value="ATPase_P-typ_cyto_dom_N"/>
</dbReference>
<dbReference type="InterPro" id="IPR018303">
    <property type="entry name" value="ATPase_P-typ_P_site"/>
</dbReference>
<dbReference type="InterPro" id="IPR023298">
    <property type="entry name" value="ATPase_P-typ_TM_dom_sf"/>
</dbReference>
<dbReference type="InterPro" id="IPR008250">
    <property type="entry name" value="ATPase_P-typ_transduc_dom_A_sf"/>
</dbReference>
<dbReference type="InterPro" id="IPR036412">
    <property type="entry name" value="HAD-like_sf"/>
</dbReference>
<dbReference type="InterPro" id="IPR023214">
    <property type="entry name" value="HAD_sf"/>
</dbReference>
<dbReference type="InterPro" id="IPR017969">
    <property type="entry name" value="Heavy-metal-associated_CS"/>
</dbReference>
<dbReference type="InterPro" id="IPR006122">
    <property type="entry name" value="HMA_Cu_ion-bd"/>
</dbReference>
<dbReference type="InterPro" id="IPR006121">
    <property type="entry name" value="HMA_dom"/>
</dbReference>
<dbReference type="InterPro" id="IPR036163">
    <property type="entry name" value="HMA_dom_sf"/>
</dbReference>
<dbReference type="InterPro" id="IPR027256">
    <property type="entry name" value="P-typ_ATPase_IB"/>
</dbReference>
<dbReference type="InterPro" id="IPR001757">
    <property type="entry name" value="P_typ_ATPase"/>
</dbReference>
<dbReference type="InterPro" id="IPR044492">
    <property type="entry name" value="P_typ_ATPase_HD_dom"/>
</dbReference>
<dbReference type="NCBIfam" id="TIGR01525">
    <property type="entry name" value="ATPase-IB_hvy"/>
    <property type="match status" value="1"/>
</dbReference>
<dbReference type="NCBIfam" id="TIGR01494">
    <property type="entry name" value="ATPase_P-type"/>
    <property type="match status" value="2"/>
</dbReference>
<dbReference type="NCBIfam" id="TIGR00003">
    <property type="entry name" value="copper ion binding protein"/>
    <property type="match status" value="6"/>
</dbReference>
<dbReference type="PANTHER" id="PTHR46594">
    <property type="entry name" value="P-TYPE CATION-TRANSPORTING ATPASE"/>
    <property type="match status" value="1"/>
</dbReference>
<dbReference type="PANTHER" id="PTHR46594:SF4">
    <property type="entry name" value="P-TYPE CATION-TRANSPORTING ATPASE"/>
    <property type="match status" value="1"/>
</dbReference>
<dbReference type="Pfam" id="PF00122">
    <property type="entry name" value="E1-E2_ATPase"/>
    <property type="match status" value="1"/>
</dbReference>
<dbReference type="Pfam" id="PF00403">
    <property type="entry name" value="HMA"/>
    <property type="match status" value="6"/>
</dbReference>
<dbReference type="Pfam" id="PF00702">
    <property type="entry name" value="Hydrolase"/>
    <property type="match status" value="1"/>
</dbReference>
<dbReference type="PRINTS" id="PR00119">
    <property type="entry name" value="CATATPASE"/>
</dbReference>
<dbReference type="PRINTS" id="PR00942">
    <property type="entry name" value="CUATPASEI"/>
</dbReference>
<dbReference type="SFLD" id="SFLDS00003">
    <property type="entry name" value="Haloacid_Dehalogenase"/>
    <property type="match status" value="1"/>
</dbReference>
<dbReference type="SFLD" id="SFLDF00027">
    <property type="entry name" value="p-type_atpase"/>
    <property type="match status" value="1"/>
</dbReference>
<dbReference type="SUPFAM" id="SSF81653">
    <property type="entry name" value="Calcium ATPase, transduction domain A"/>
    <property type="match status" value="1"/>
</dbReference>
<dbReference type="SUPFAM" id="SSF81665">
    <property type="entry name" value="Calcium ATPase, transmembrane domain M"/>
    <property type="match status" value="1"/>
</dbReference>
<dbReference type="SUPFAM" id="SSF56784">
    <property type="entry name" value="HAD-like"/>
    <property type="match status" value="1"/>
</dbReference>
<dbReference type="SUPFAM" id="SSF55008">
    <property type="entry name" value="HMA, heavy metal-associated domain"/>
    <property type="match status" value="6"/>
</dbReference>
<dbReference type="PROSITE" id="PS00154">
    <property type="entry name" value="ATPASE_E1_E2"/>
    <property type="match status" value="1"/>
</dbReference>
<dbReference type="PROSITE" id="PS01047">
    <property type="entry name" value="HMA_1"/>
    <property type="match status" value="6"/>
</dbReference>
<dbReference type="PROSITE" id="PS50846">
    <property type="entry name" value="HMA_2"/>
    <property type="match status" value="7"/>
</dbReference>
<reference key="1">
    <citation type="journal article" date="1994" name="Nat. Genet.">
        <title>The mottled gene is the mouse homologue of the Menkes disease gene.</title>
        <authorList>
            <person name="Levinson B."/>
            <person name="Vulpe C."/>
            <person name="Elder B."/>
            <person name="Martin C."/>
            <person name="Verley F."/>
            <person name="Packman S."/>
            <person name="Gitschier J."/>
        </authorList>
    </citation>
    <scope>NUCLEOTIDE SEQUENCE [MRNA]</scope>
    <scope>INVOLVEMENT IN MOTTLED PHENOTYPES</scope>
    <scope>TISSUE SPECIFICITY</scope>
    <source>
        <strain>BALB/cJ</strain>
        <tissue>Brain</tissue>
    </source>
</reference>
<reference key="2">
    <citation type="journal article" date="1994" name="Nat. Genet.">
        <title>Mutations in the murine homologue of the Menkes gene in dappled and blotchy mice.</title>
        <authorList>
            <person name="Mercer J.F.B."/>
            <person name="Grimes A."/>
            <person name="Ambrosini L."/>
            <person name="Lockhart P."/>
            <person name="Paynter J.A."/>
            <person name="Dierick H."/>
            <person name="Glover T.W."/>
        </authorList>
    </citation>
    <scope>NUCLEOTIDE SEQUENCE [MRNA]</scope>
    <scope>INVOLVEMENT IN MOTTLED PHENOTYPES</scope>
    <source>
        <strain>BALB/cJ</strain>
        <strain>DL</strain>
        <strain>ICR X Swiss Webster</strain>
        <tissue>Embryo</tissue>
        <tissue>Kidney</tissue>
    </source>
</reference>
<reference key="3">
    <citation type="journal article" date="1997" name="Biochem. Mol. Biol. Int.">
        <title>Occurrence of two missense mutations in Cu-ATPase of the macular mouse, a Menkes disease model.</title>
        <authorList>
            <person name="Ohta Y."/>
            <person name="Shiraishi N."/>
            <person name="Nishikimi M."/>
        </authorList>
    </citation>
    <scope>NUCLEOTIDE SEQUENCE [MRNA]</scope>
    <scope>INVOLVEMENT IN MOTTLED PHENOTYPES</scope>
    <scope>VARIANTS ARG-674 AND PRO-1381</scope>
    <source>
        <strain>C3H/HeJ</strain>
        <tissue>Placenta</tissue>
    </source>
</reference>
<reference key="4">
    <citation type="journal article" date="1997" name="Hum. Mol. Genet.">
        <title>Molecular basis of the brindled mouse mutant (Mo(br)): a murine model of Menkes disease.</title>
        <authorList>
            <person name="Grimes A."/>
            <person name="Hearn C.J."/>
            <person name="Lockhart P."/>
            <person name="Newgreen D.F."/>
            <person name="Mercer J.F.B."/>
        </authorList>
    </citation>
    <scope>NUCLEOTIDE SEQUENCE [MRNA]</scope>
    <scope>INVOLVEMENT IN MOTTLED PHENOTYPES</scope>
    <scope>TISSUE SPECIFICITY</scope>
    <source>
        <strain>CBA X C3H</strain>
    </source>
</reference>
<reference key="5">
    <citation type="journal article" date="2009" name="PLoS Biol.">
        <title>Lineage-specific biology revealed by a finished genome assembly of the mouse.</title>
        <authorList>
            <person name="Church D.M."/>
            <person name="Goodstadt L."/>
            <person name="Hillier L.W."/>
            <person name="Zody M.C."/>
            <person name="Goldstein S."/>
            <person name="She X."/>
            <person name="Bult C.J."/>
            <person name="Agarwala R."/>
            <person name="Cherry J.L."/>
            <person name="DiCuccio M."/>
            <person name="Hlavina W."/>
            <person name="Kapustin Y."/>
            <person name="Meric P."/>
            <person name="Maglott D."/>
            <person name="Birtle Z."/>
            <person name="Marques A.C."/>
            <person name="Graves T."/>
            <person name="Zhou S."/>
            <person name="Teague B."/>
            <person name="Potamousis K."/>
            <person name="Churas C."/>
            <person name="Place M."/>
            <person name="Herschleb J."/>
            <person name="Runnheim R."/>
            <person name="Forrest D."/>
            <person name="Amos-Landgraf J."/>
            <person name="Schwartz D.C."/>
            <person name="Cheng Z."/>
            <person name="Lindblad-Toh K."/>
            <person name="Eichler E.E."/>
            <person name="Ponting C.P."/>
        </authorList>
    </citation>
    <scope>NUCLEOTIDE SEQUENCE [LARGE SCALE GENOMIC DNA]</scope>
    <source>
        <strain>C57BL/6J</strain>
    </source>
</reference>
<reference key="6">
    <citation type="journal article" date="2003" name="Endocrinology">
        <title>Menkes protein contributes to the function of peptidylglycine alpha-amidating monooxygenase.</title>
        <authorList>
            <person name="Steveson T.C."/>
            <person name="Ciccotosto G.D."/>
            <person name="Ma X.M."/>
            <person name="Mueller G.P."/>
            <person name="Mains R.E."/>
            <person name="Eipper B.A."/>
        </authorList>
    </citation>
    <scope>FUNCTION</scope>
    <scope>TISSUE SPECIFICITY</scope>
    <scope>DEVELOPMENTAL STAGE</scope>
</reference>
<reference key="7">
    <citation type="journal article" date="2005" name="J. Neurosci.">
        <title>NMDA receptor activation mediates copper homeostasis in hippocampal neurons.</title>
        <authorList>
            <person name="Schlief M.L."/>
            <person name="Craig A.M."/>
            <person name="Gitlin J.D."/>
        </authorList>
    </citation>
    <scope>FUNCTION</scope>
    <scope>TISSUE SPECIFICITY</scope>
</reference>
<reference key="8">
    <citation type="journal article" date="2006" name="FASEB J.">
        <title>Essential role for the Menkes ATPase in activation of extracellular superoxide dismutase: implication for vascular oxidative stress.</title>
        <authorList>
            <person name="Qin Z."/>
            <person name="Itoh S."/>
            <person name="Jeney V."/>
            <person name="Ushio-Fukai M."/>
            <person name="Fukai T."/>
        </authorList>
    </citation>
    <scope>FUNCTION</scope>
    <scope>TISSUE SPECIFICITY</scope>
    <scope>SUBCELLULAR LOCATION</scope>
    <scope>INTERACTION WITH SOD3</scope>
</reference>
<reference key="9">
    <citation type="journal article" date="2008" name="Nature">
        <title>Cell-specific ATP7A transport sustains copper-dependent tyrosinase activity in melanosomes.</title>
        <authorList>
            <person name="Setty S.R."/>
            <person name="Tenza D."/>
            <person name="Sviderskaya E.V."/>
            <person name="Bennett D.C."/>
            <person name="Raposo G."/>
            <person name="Marks M.S."/>
        </authorList>
    </citation>
    <scope>FUNCTION</scope>
    <scope>TISSUE SPECIFICITY</scope>
    <scope>SUBCELLULAR LOCATION</scope>
    <scope>INTERACTION WITH TYRP1</scope>
</reference>
<reference key="10">
    <citation type="journal article" date="2009" name="Immunity">
        <title>The phagosomal proteome in interferon-gamma-activated macrophages.</title>
        <authorList>
            <person name="Trost M."/>
            <person name="English L."/>
            <person name="Lemieux S."/>
            <person name="Courcelles M."/>
            <person name="Desjardins M."/>
            <person name="Thibault P."/>
        </authorList>
    </citation>
    <scope>PHOSPHORYLATION [LARGE SCALE ANALYSIS] AT SER-357 AND SER-1457</scope>
    <scope>IDENTIFICATION BY MASS SPECTROMETRY [LARGE SCALE ANALYSIS]</scope>
</reference>
<reference key="11">
    <citation type="journal article" date="2010" name="Cell">
        <title>A tissue-specific atlas of mouse protein phosphorylation and expression.</title>
        <authorList>
            <person name="Huttlin E.L."/>
            <person name="Jedrychowski M.P."/>
            <person name="Elias J.E."/>
            <person name="Goswami T."/>
            <person name="Rad R."/>
            <person name="Beausoleil S.A."/>
            <person name="Villen J."/>
            <person name="Haas W."/>
            <person name="Sowa M.E."/>
            <person name="Gygi S.P."/>
        </authorList>
    </citation>
    <scope>PHOSPHORYLATION [LARGE SCALE ANALYSIS] AT SER-357; SER-362; SER-1464; SER-1467 AND SER-1477</scope>
    <scope>IDENTIFICATION BY MASS SPECTROMETRY [LARGE SCALE ANALYSIS]</scope>
    <source>
        <tissue>Brain</tissue>
        <tissue>Kidney</tissue>
        <tissue>Lung</tissue>
        <tissue>Pancreas</tissue>
        <tissue>Testis</tissue>
    </source>
</reference>
<reference key="12">
    <citation type="journal article" date="2015" name="J. Pathol.">
        <title>X-linked spinal muscular atrophy in mice caused by autonomous loss of ATP7A in the motor neuron.</title>
        <authorList>
            <person name="Hodgkinson V.L."/>
            <person name="Dale J.M."/>
            <person name="Garcia M.L."/>
            <person name="Weisman G.A."/>
            <person name="Lee J."/>
            <person name="Gitlin J.D."/>
            <person name="Petris M.J."/>
        </authorList>
    </citation>
    <scope>FUNCTION</scope>
    <scope>TISSUE SPECIFICITY</scope>
    <scope>DISRUPTION PHENOTYPE</scope>
</reference>
<reference key="13">
    <citation type="journal article" date="2016" name="Metallomics">
        <title>Multiple di-leucines in the ATP7A copper transporter are required for retrograde trafficking to the trans-Golgi network.</title>
        <authorList>
            <person name="Zhu S."/>
            <person name="Shanbhag V."/>
            <person name="Hodgkinson V.L."/>
            <person name="Petris M.J."/>
        </authorList>
    </citation>
    <scope>FUNCTION</scope>
    <scope>SUBCELLULAR LOCATION</scope>
    <scope>DOMAIN</scope>
    <scope>MUTAGENESIS OF 1443-LEU-LEU-1444; 1458-LEU-LEU-1459 AND 1478-LEU-LEU-1479</scope>
</reference>
<proteinExistence type="evidence at protein level"/>
<accession>Q64430</accession>
<accession>A2AG69</accession>
<accession>O35101</accession>
<accession>P97422</accession>
<accession>Q64431</accession>
<name>ATP7A_MOUSE</name>
<protein>
    <recommendedName>
        <fullName>Copper-transporting ATPase 1</fullName>
        <ecNumber evidence="3">7.2.2.8</ecNumber>
    </recommendedName>
    <alternativeName>
        <fullName>Copper pump 1</fullName>
    </alternativeName>
    <alternativeName>
        <fullName>Menkes disease-associated protein homolog</fullName>
    </alternativeName>
</protein>
<evidence type="ECO:0000250" key="1"/>
<evidence type="ECO:0000250" key="2">
    <source>
        <dbReference type="UniProtKB" id="P70705"/>
    </source>
</evidence>
<evidence type="ECO:0000250" key="3">
    <source>
        <dbReference type="UniProtKB" id="Q04656"/>
    </source>
</evidence>
<evidence type="ECO:0000255" key="4"/>
<evidence type="ECO:0000255" key="5">
    <source>
        <dbReference type="PROSITE-ProRule" id="PRU00280"/>
    </source>
</evidence>
<evidence type="ECO:0000269" key="6">
    <source>
    </source>
</evidence>
<evidence type="ECO:0000269" key="7">
    <source>
    </source>
</evidence>
<evidence type="ECO:0000269" key="8">
    <source>
    </source>
</evidence>
<evidence type="ECO:0000269" key="9">
    <source>
    </source>
</evidence>
<evidence type="ECO:0000269" key="10">
    <source>
    </source>
</evidence>
<evidence type="ECO:0000269" key="11">
    <source>
    </source>
</evidence>
<evidence type="ECO:0000269" key="12">
    <source>
    </source>
</evidence>
<evidence type="ECO:0000269" key="13">
    <source>
    </source>
</evidence>
<evidence type="ECO:0000269" key="14">
    <source>
    </source>
</evidence>
<evidence type="ECO:0000269" key="15">
    <source>
    </source>
</evidence>
<evidence type="ECO:0000303" key="16">
    <source>
    </source>
</evidence>
<evidence type="ECO:0000305" key="17"/>
<evidence type="ECO:0000312" key="18">
    <source>
        <dbReference type="MGI" id="MGI:99400"/>
    </source>
</evidence>
<evidence type="ECO:0007744" key="19">
    <source>
    </source>
</evidence>
<evidence type="ECO:0007744" key="20">
    <source>
    </source>
</evidence>
<keyword id="KW-0067">ATP-binding</keyword>
<keyword id="KW-1003">Cell membrane</keyword>
<keyword id="KW-0966">Cell projection</keyword>
<keyword id="KW-0186">Copper</keyword>
<keyword id="KW-0187">Copper transport</keyword>
<keyword id="KW-0225">Disease variant</keyword>
<keyword id="KW-0967">Endosome</keyword>
<keyword id="KW-0325">Glycoprotein</keyword>
<keyword id="KW-0333">Golgi apparatus</keyword>
<keyword id="KW-0406">Ion transport</keyword>
<keyword id="KW-0460">Magnesium</keyword>
<keyword id="KW-0472">Membrane</keyword>
<keyword id="KW-0479">Metal-binding</keyword>
<keyword id="KW-0547">Nucleotide-binding</keyword>
<keyword id="KW-0597">Phosphoprotein</keyword>
<keyword id="KW-1185">Reference proteome</keyword>
<keyword id="KW-0677">Repeat</keyword>
<keyword id="KW-0770">Synapse</keyword>
<keyword id="KW-1278">Translocase</keyword>
<keyword id="KW-0812">Transmembrane</keyword>
<keyword id="KW-1133">Transmembrane helix</keyword>
<keyword id="KW-0813">Transport</keyword>